<organism>
    <name type="scientific">Oryctolagus cuniculus</name>
    <name type="common">Rabbit</name>
    <dbReference type="NCBI Taxonomy" id="9986"/>
    <lineage>
        <taxon>Eukaryota</taxon>
        <taxon>Metazoa</taxon>
        <taxon>Chordata</taxon>
        <taxon>Craniata</taxon>
        <taxon>Vertebrata</taxon>
        <taxon>Euteleostomi</taxon>
        <taxon>Mammalia</taxon>
        <taxon>Eutheria</taxon>
        <taxon>Euarchontoglires</taxon>
        <taxon>Glires</taxon>
        <taxon>Lagomorpha</taxon>
        <taxon>Leporidae</taxon>
        <taxon>Oryctolagus</taxon>
    </lineage>
</organism>
<proteinExistence type="evidence at protein level"/>
<name>DEF3_RABIT</name>
<comment type="function">
    <text>This peptide has antibiotic, anti-fungi and antiviral activity. It also inhibits corticotropin (ACTH) stimulated corticosterone production.</text>
</comment>
<comment type="subcellular location">
    <subcellularLocation>
        <location>Secreted</location>
    </subcellularLocation>
</comment>
<comment type="similarity">
    <text evidence="6">Belongs to the alpha-defensin family.</text>
</comment>
<protein>
    <recommendedName>
        <fullName>Corticostatin-3</fullName>
    </recommendedName>
    <alternativeName>
        <fullName>Antiadrenocorticotropin peptide III</fullName>
    </alternativeName>
    <alternativeName>
        <fullName>Corticostatin III</fullName>
        <shortName>CS-III</shortName>
    </alternativeName>
    <alternativeName>
        <fullName>Macrophage antibiotic peptide MCP-1</fullName>
        <shortName>NP-1</shortName>
    </alternativeName>
</protein>
<accession>P01376</accession>
<dbReference type="EMBL" id="M28883">
    <property type="protein sequence ID" value="AAA31387.1"/>
    <property type="molecule type" value="mRNA"/>
</dbReference>
<dbReference type="EMBL" id="M28072">
    <property type="protein sequence ID" value="AAA31388.1"/>
    <property type="molecule type" value="Genomic_DNA"/>
</dbReference>
<dbReference type="PIR" id="A45811">
    <property type="entry name" value="WTRBM1"/>
</dbReference>
<dbReference type="RefSeq" id="NP_001164486.1">
    <property type="nucleotide sequence ID" value="NM_001171015.2"/>
</dbReference>
<dbReference type="SMR" id="P01376"/>
<dbReference type="TCDB" id="1.C.19.1.2">
    <property type="family name" value="the defensin (defensin) family"/>
</dbReference>
<dbReference type="PaxDb" id="9986-ENSOCUP00000002802"/>
<dbReference type="Ensembl" id="ENSOCUT00000003227.4">
    <property type="protein sequence ID" value="ENSOCUP00000002802.2"/>
    <property type="gene ID" value="ENSOCUG00000021307.2"/>
</dbReference>
<dbReference type="GeneID" id="100009115"/>
<dbReference type="KEGG" id="ocu:100009115"/>
<dbReference type="CTD" id="178982"/>
<dbReference type="eggNOG" id="ENOG502T2EX">
    <property type="taxonomic scope" value="Eukaryota"/>
</dbReference>
<dbReference type="GeneTree" id="ENSGT00940000153268"/>
<dbReference type="HOGENOM" id="CLU_160803_0_0_1"/>
<dbReference type="InParanoid" id="P01376"/>
<dbReference type="OMA" id="CTCRLVY"/>
<dbReference type="TreeFam" id="TF338414"/>
<dbReference type="Proteomes" id="UP000001811">
    <property type="component" value="Unplaced"/>
</dbReference>
<dbReference type="Bgee" id="ENSOCUG00000021307">
    <property type="expression patterns" value="Expressed in lung and 18 other cell types or tissues"/>
</dbReference>
<dbReference type="GO" id="GO:0031012">
    <property type="term" value="C:extracellular matrix"/>
    <property type="evidence" value="ECO:0007669"/>
    <property type="project" value="TreeGrafter"/>
</dbReference>
<dbReference type="GO" id="GO:0005615">
    <property type="term" value="C:extracellular space"/>
    <property type="evidence" value="ECO:0007669"/>
    <property type="project" value="InterPro"/>
</dbReference>
<dbReference type="GO" id="GO:0019731">
    <property type="term" value="P:antibacterial humoral response"/>
    <property type="evidence" value="ECO:0007669"/>
    <property type="project" value="TreeGrafter"/>
</dbReference>
<dbReference type="GO" id="GO:0061844">
    <property type="term" value="P:antimicrobial humoral immune response mediated by antimicrobial peptide"/>
    <property type="evidence" value="ECO:0000314"/>
    <property type="project" value="UniProtKB"/>
</dbReference>
<dbReference type="GO" id="GO:0071222">
    <property type="term" value="P:cellular response to lipopolysaccharide"/>
    <property type="evidence" value="ECO:0007669"/>
    <property type="project" value="TreeGrafter"/>
</dbReference>
<dbReference type="GO" id="GO:0050832">
    <property type="term" value="P:defense response to fungus"/>
    <property type="evidence" value="ECO:0007669"/>
    <property type="project" value="UniProtKB-KW"/>
</dbReference>
<dbReference type="GO" id="GO:0050829">
    <property type="term" value="P:defense response to Gram-negative bacterium"/>
    <property type="evidence" value="ECO:0007669"/>
    <property type="project" value="TreeGrafter"/>
</dbReference>
<dbReference type="GO" id="GO:0050830">
    <property type="term" value="P:defense response to Gram-positive bacterium"/>
    <property type="evidence" value="ECO:0007669"/>
    <property type="project" value="TreeGrafter"/>
</dbReference>
<dbReference type="GO" id="GO:0051607">
    <property type="term" value="P:defense response to virus"/>
    <property type="evidence" value="ECO:0007669"/>
    <property type="project" value="UniProtKB-KW"/>
</dbReference>
<dbReference type="GO" id="GO:0051673">
    <property type="term" value="P:disruption of plasma membrane integrity in another organism"/>
    <property type="evidence" value="ECO:0007669"/>
    <property type="project" value="TreeGrafter"/>
</dbReference>
<dbReference type="GO" id="GO:0002227">
    <property type="term" value="P:innate immune response in mucosa"/>
    <property type="evidence" value="ECO:0007669"/>
    <property type="project" value="TreeGrafter"/>
</dbReference>
<dbReference type="GO" id="GO:0031640">
    <property type="term" value="P:killing of cells of another organism"/>
    <property type="evidence" value="ECO:0000314"/>
    <property type="project" value="UniProtKB"/>
</dbReference>
<dbReference type="InterPro" id="IPR016327">
    <property type="entry name" value="Alpha-defensin"/>
</dbReference>
<dbReference type="InterPro" id="IPR006081">
    <property type="entry name" value="Alpha-defensin_C"/>
</dbReference>
<dbReference type="InterPro" id="IPR002366">
    <property type="entry name" value="Alpha-defensin_N"/>
</dbReference>
<dbReference type="InterPro" id="IPR006080">
    <property type="entry name" value="Beta/alpha-defensin_C"/>
</dbReference>
<dbReference type="PANTHER" id="PTHR11876">
    <property type="entry name" value="ALPHA-DEFENSIN 1"/>
    <property type="match status" value="1"/>
</dbReference>
<dbReference type="PANTHER" id="PTHR11876:SF28">
    <property type="entry name" value="ALPHA-DEFENSIN 1"/>
    <property type="match status" value="1"/>
</dbReference>
<dbReference type="Pfam" id="PF00323">
    <property type="entry name" value="Defensin_1"/>
    <property type="match status" value="1"/>
</dbReference>
<dbReference type="Pfam" id="PF00879">
    <property type="entry name" value="Defensin_propep"/>
    <property type="match status" value="1"/>
</dbReference>
<dbReference type="PIRSF" id="PIRSF001875">
    <property type="entry name" value="Alpha-defensin"/>
    <property type="match status" value="1"/>
</dbReference>
<dbReference type="SMART" id="SM01418">
    <property type="entry name" value="Defensin_propep"/>
    <property type="match status" value="1"/>
</dbReference>
<dbReference type="SMART" id="SM00048">
    <property type="entry name" value="DEFSN"/>
    <property type="match status" value="1"/>
</dbReference>
<dbReference type="SUPFAM" id="SSF57392">
    <property type="entry name" value="Defensin-like"/>
    <property type="match status" value="1"/>
</dbReference>
<dbReference type="PROSITE" id="PS00269">
    <property type="entry name" value="DEFENSIN"/>
    <property type="match status" value="1"/>
</dbReference>
<keyword id="KW-0044">Antibiotic</keyword>
<keyword id="KW-0929">Antimicrobial</keyword>
<keyword id="KW-0051">Antiviral defense</keyword>
<keyword id="KW-0211">Defensin</keyword>
<keyword id="KW-0903">Direct protein sequencing</keyword>
<keyword id="KW-1015">Disulfide bond</keyword>
<keyword id="KW-0295">Fungicide</keyword>
<keyword id="KW-1185">Reference proteome</keyword>
<keyword id="KW-0964">Secreted</keyword>
<keyword id="KW-0732">Signal</keyword>
<evidence type="ECO:0000250" key="1"/>
<evidence type="ECO:0000255" key="2"/>
<evidence type="ECO:0000269" key="3">
    <source>
    </source>
</evidence>
<evidence type="ECO:0000269" key="4">
    <source>
    </source>
</evidence>
<evidence type="ECO:0000269" key="5">
    <source>
    </source>
</evidence>
<evidence type="ECO:0000305" key="6"/>
<sequence length="95" mass="10460">MRTLALLAAILLVALQAQAEHVSVSIDEVVDQQPPQAEDQDVAIYVKEHESSALEALGVKAGVVCACRRALCLPRERRAGFCRIRGRIHPLCCRR</sequence>
<reference key="1">
    <citation type="journal article" date="1989" name="J. Immunol.">
        <title>The structure of the rabbit macrophage defensin genes and their organ-specific expression.</title>
        <authorList>
            <person name="Ganz T."/>
            <person name="Rayner J.R."/>
            <person name="Valore E.V."/>
            <person name="Tumolo A."/>
            <person name="Talmadge K."/>
            <person name="Fuller F."/>
        </authorList>
    </citation>
    <scope>NUCLEOTIDE SEQUENCE [GENOMIC DNA / MRNA]</scope>
</reference>
<reference key="2">
    <citation type="journal article" date="1983" name="J. Biol. Chem.">
        <title>Primary structures of MCP-1 and MCP-2, natural peptide antibiotics of rabbit lung macrophages.</title>
        <authorList>
            <person name="Selsted M.E."/>
            <person name="Brown D.M."/>
            <person name="Delange R.J."/>
            <person name="Lehrer R.I."/>
        </authorList>
    </citation>
    <scope>PROTEIN SEQUENCE OF 63-95</scope>
    <source>
        <tissue>Lung macrophage</tissue>
    </source>
</reference>
<reference key="3">
    <citation type="journal article" date="1985" name="J. Biol. Chem.">
        <title>Primary structures of six antimicrobial peptides of rabbit peritoneal neutrophils.</title>
        <authorList>
            <person name="Selsted M.E."/>
            <person name="Brown D.M."/>
            <person name="Delange R.J."/>
            <person name="Harwig S.S.L."/>
            <person name="Lehrer R.I."/>
        </authorList>
    </citation>
    <scope>PROTEIN SEQUENCE OF 63-95</scope>
    <source>
        <tissue>Peritoneal neutrophil</tissue>
    </source>
</reference>
<reference key="4">
    <citation type="journal article" date="1992" name="Endocrinology">
        <title>Isolation and mode of action of rabbit corticostatic (antiadrenocorticotropin) peptides.</title>
        <authorList>
            <person name="Zhu Q."/>
            <person name="Solomon S."/>
        </authorList>
    </citation>
    <scope>PROTEIN SEQUENCE OF 63-95</scope>
    <source>
        <tissue>Lung</tissue>
    </source>
</reference>
<feature type="signal peptide" evidence="2">
    <location>
        <begin position="1"/>
        <end position="19"/>
    </location>
</feature>
<feature type="propeptide" id="PRO_0000006809" evidence="3 4 5">
    <location>
        <begin position="20"/>
        <end position="62"/>
    </location>
</feature>
<feature type="peptide" id="PRO_0000006810" description="Corticostatin-3">
    <location>
        <begin position="63"/>
        <end position="95"/>
    </location>
</feature>
<feature type="disulfide bond" evidence="1">
    <location>
        <begin position="65"/>
        <end position="93"/>
    </location>
</feature>
<feature type="disulfide bond" evidence="1">
    <location>
        <begin position="67"/>
        <end position="82"/>
    </location>
</feature>
<feature type="disulfide bond" evidence="1">
    <location>
        <begin position="72"/>
        <end position="92"/>
    </location>
</feature>